<comment type="function">
    <text evidence="1">General inhibitor of pancreatic serine proteases: inhibits chymotrypsin, trypsin, elastases, factor X, kallikrein as well as a variety of other proteases.</text>
</comment>
<comment type="subunit">
    <text evidence="1">Homodimer.</text>
</comment>
<comment type="subcellular location">
    <subcellularLocation>
        <location evidence="1">Periplasm</location>
    </subcellularLocation>
</comment>
<comment type="similarity">
    <text evidence="1">Belongs to the protease inhibitor I11 (ecotin) family.</text>
</comment>
<accession>Q8XE46</accession>
<reference key="1">
    <citation type="journal article" date="2001" name="Nature">
        <title>Genome sequence of enterohaemorrhagic Escherichia coli O157:H7.</title>
        <authorList>
            <person name="Perna N.T."/>
            <person name="Plunkett G. III"/>
            <person name="Burland V."/>
            <person name="Mau B."/>
            <person name="Glasner J.D."/>
            <person name="Rose D.J."/>
            <person name="Mayhew G.F."/>
            <person name="Evans P.S."/>
            <person name="Gregor J."/>
            <person name="Kirkpatrick H.A."/>
            <person name="Posfai G."/>
            <person name="Hackett J."/>
            <person name="Klink S."/>
            <person name="Boutin A."/>
            <person name="Shao Y."/>
            <person name="Miller L."/>
            <person name="Grotbeck E.J."/>
            <person name="Davis N.W."/>
            <person name="Lim A."/>
            <person name="Dimalanta E.T."/>
            <person name="Potamousis K."/>
            <person name="Apodaca J."/>
            <person name="Anantharaman T.S."/>
            <person name="Lin J."/>
            <person name="Yen G."/>
            <person name="Schwartz D.C."/>
            <person name="Welch R.A."/>
            <person name="Blattner F.R."/>
        </authorList>
    </citation>
    <scope>NUCLEOTIDE SEQUENCE [LARGE SCALE GENOMIC DNA]</scope>
    <source>
        <strain>O157:H7 / EDL933 / ATCC 700927 / EHEC</strain>
    </source>
</reference>
<reference key="2">
    <citation type="journal article" date="2001" name="DNA Res.">
        <title>Complete genome sequence of enterohemorrhagic Escherichia coli O157:H7 and genomic comparison with a laboratory strain K-12.</title>
        <authorList>
            <person name="Hayashi T."/>
            <person name="Makino K."/>
            <person name="Ohnishi M."/>
            <person name="Kurokawa K."/>
            <person name="Ishii K."/>
            <person name="Yokoyama K."/>
            <person name="Han C.-G."/>
            <person name="Ohtsubo E."/>
            <person name="Nakayama K."/>
            <person name="Murata T."/>
            <person name="Tanaka M."/>
            <person name="Tobe T."/>
            <person name="Iida T."/>
            <person name="Takami H."/>
            <person name="Honda T."/>
            <person name="Sasakawa C."/>
            <person name="Ogasawara N."/>
            <person name="Yasunaga T."/>
            <person name="Kuhara S."/>
            <person name="Shiba T."/>
            <person name="Hattori M."/>
            <person name="Shinagawa H."/>
        </authorList>
    </citation>
    <scope>NUCLEOTIDE SEQUENCE [LARGE SCALE GENOMIC DNA]</scope>
    <source>
        <strain>O157:H7 / Sakai / RIMD 0509952 / EHEC</strain>
    </source>
</reference>
<sequence length="162" mass="18195">MKTILPAVLFAAFATTSAWAAESVQPLEKIAPYPQAEKGMKRQVIQLTPQEDESTLKVELLIGQTLEVDCNLHRLGGKLESKTLEGWGYDYYVFDKVSSPVSTMMACPDGKKEKKFVTAYLGDTGMLRYNSKLPIVVYTPDNVDVKYRVWKAEEKIDNAVVR</sequence>
<organism>
    <name type="scientific">Escherichia coli O157:H7</name>
    <dbReference type="NCBI Taxonomy" id="83334"/>
    <lineage>
        <taxon>Bacteria</taxon>
        <taxon>Pseudomonadati</taxon>
        <taxon>Pseudomonadota</taxon>
        <taxon>Gammaproteobacteria</taxon>
        <taxon>Enterobacterales</taxon>
        <taxon>Enterobacteriaceae</taxon>
        <taxon>Escherichia</taxon>
    </lineage>
</organism>
<dbReference type="EMBL" id="AE005174">
    <property type="protein sequence ID" value="AAG57344.1"/>
    <property type="molecule type" value="Genomic_DNA"/>
</dbReference>
<dbReference type="EMBL" id="BA000007">
    <property type="protein sequence ID" value="BAB36521.1"/>
    <property type="molecule type" value="Genomic_DNA"/>
</dbReference>
<dbReference type="PIR" id="B91016">
    <property type="entry name" value="B91016"/>
</dbReference>
<dbReference type="PIR" id="D85860">
    <property type="entry name" value="D85860"/>
</dbReference>
<dbReference type="RefSeq" id="NP_311125.1">
    <property type="nucleotide sequence ID" value="NC_002695.1"/>
</dbReference>
<dbReference type="RefSeq" id="WP_000849216.1">
    <property type="nucleotide sequence ID" value="NZ_VOAI01000001.1"/>
</dbReference>
<dbReference type="SMR" id="Q8XE46"/>
<dbReference type="STRING" id="155864.Z3467"/>
<dbReference type="MEROPS" id="I11.001"/>
<dbReference type="GeneID" id="75172337"/>
<dbReference type="GeneID" id="916804"/>
<dbReference type="KEGG" id="ece:Z3467"/>
<dbReference type="KEGG" id="ecs:ECs_3098"/>
<dbReference type="PATRIC" id="fig|386585.9.peg.3232"/>
<dbReference type="eggNOG" id="COG4574">
    <property type="taxonomic scope" value="Bacteria"/>
</dbReference>
<dbReference type="HOGENOM" id="CLU_111565_0_0_6"/>
<dbReference type="OMA" id="PKAEKGM"/>
<dbReference type="Proteomes" id="UP000000558">
    <property type="component" value="Chromosome"/>
</dbReference>
<dbReference type="Proteomes" id="UP000002519">
    <property type="component" value="Chromosome"/>
</dbReference>
<dbReference type="GO" id="GO:0042597">
    <property type="term" value="C:periplasmic space"/>
    <property type="evidence" value="ECO:0007669"/>
    <property type="project" value="UniProtKB-SubCell"/>
</dbReference>
<dbReference type="GO" id="GO:0004867">
    <property type="term" value="F:serine-type endopeptidase inhibitor activity"/>
    <property type="evidence" value="ECO:0007669"/>
    <property type="project" value="UniProtKB-UniRule"/>
</dbReference>
<dbReference type="CDD" id="cd00242">
    <property type="entry name" value="Ecotin"/>
    <property type="match status" value="1"/>
</dbReference>
<dbReference type="FunFam" id="2.60.40.550:FF:000001">
    <property type="entry name" value="Ecotin"/>
    <property type="match status" value="1"/>
</dbReference>
<dbReference type="FunFam" id="4.10.1230.10:FF:000001">
    <property type="entry name" value="Ecotin"/>
    <property type="match status" value="1"/>
</dbReference>
<dbReference type="Gene3D" id="2.60.40.550">
    <property type="entry name" value="Ecotin"/>
    <property type="match status" value="1"/>
</dbReference>
<dbReference type="Gene3D" id="4.10.1230.10">
    <property type="entry name" value="Ecotin, trypsin inhibitor"/>
    <property type="match status" value="1"/>
</dbReference>
<dbReference type="HAMAP" id="MF_00706">
    <property type="entry name" value="Ecotin"/>
    <property type="match status" value="1"/>
</dbReference>
<dbReference type="InterPro" id="IPR027438">
    <property type="entry name" value="Ecotin_C"/>
</dbReference>
<dbReference type="InterPro" id="IPR036198">
    <property type="entry name" value="Ecotin_sf"/>
</dbReference>
<dbReference type="InterPro" id="IPR005658">
    <property type="entry name" value="Prot_inh_ecotin"/>
</dbReference>
<dbReference type="InterPro" id="IPR023084">
    <property type="entry name" value="Prot_inh_ecotin_gammaproteobac"/>
</dbReference>
<dbReference type="NCBIfam" id="NF002987">
    <property type="entry name" value="PRK03719.1"/>
    <property type="match status" value="1"/>
</dbReference>
<dbReference type="PANTHER" id="PTHR35890">
    <property type="match status" value="1"/>
</dbReference>
<dbReference type="PANTHER" id="PTHR35890:SF3">
    <property type="entry name" value="ECOTIN"/>
    <property type="match status" value="1"/>
</dbReference>
<dbReference type="Pfam" id="PF03974">
    <property type="entry name" value="Ecotin"/>
    <property type="match status" value="1"/>
</dbReference>
<dbReference type="PIRSF" id="PIRSF006865">
    <property type="entry name" value="Prot_inh_ecotin"/>
    <property type="match status" value="1"/>
</dbReference>
<dbReference type="SUPFAM" id="SSF49772">
    <property type="entry name" value="Ecotin, trypsin inhibitor"/>
    <property type="match status" value="1"/>
</dbReference>
<feature type="signal peptide" evidence="1">
    <location>
        <begin position="1"/>
        <end position="20"/>
    </location>
</feature>
<feature type="chain" id="PRO_0000007425" description="Ecotin">
    <location>
        <begin position="21"/>
        <end position="162"/>
    </location>
</feature>
<feature type="site" description="Reactive bond" evidence="1">
    <location>
        <begin position="104"/>
        <end position="105"/>
    </location>
</feature>
<feature type="disulfide bond" evidence="1">
    <location>
        <begin position="70"/>
        <end position="107"/>
    </location>
</feature>
<protein>
    <recommendedName>
        <fullName evidence="1">Ecotin</fullName>
    </recommendedName>
</protein>
<gene>
    <name evidence="1" type="primary">eco</name>
    <name type="ordered locus">Z3467</name>
    <name type="ordered locus">ECs3098</name>
</gene>
<evidence type="ECO:0000255" key="1">
    <source>
        <dbReference type="HAMAP-Rule" id="MF_00706"/>
    </source>
</evidence>
<keyword id="KW-1015">Disulfide bond</keyword>
<keyword id="KW-0574">Periplasm</keyword>
<keyword id="KW-0646">Protease inhibitor</keyword>
<keyword id="KW-1185">Reference proteome</keyword>
<keyword id="KW-0722">Serine protease inhibitor</keyword>
<keyword id="KW-0732">Signal</keyword>
<name>ECOT_ECO57</name>
<proteinExistence type="inferred from homology"/>